<proteinExistence type="inferred from homology"/>
<accession>B7JGN1</accession>
<gene>
    <name evidence="1" type="primary">atpG</name>
    <name type="ordered locus">BCAH820_5397</name>
</gene>
<evidence type="ECO:0000255" key="1">
    <source>
        <dbReference type="HAMAP-Rule" id="MF_00815"/>
    </source>
</evidence>
<protein>
    <recommendedName>
        <fullName evidence="1">ATP synthase gamma chain</fullName>
    </recommendedName>
    <alternativeName>
        <fullName evidence="1">ATP synthase F1 sector gamma subunit</fullName>
    </alternativeName>
    <alternativeName>
        <fullName evidence="1">F-ATPase gamma subunit</fullName>
    </alternativeName>
</protein>
<dbReference type="EMBL" id="CP001283">
    <property type="protein sequence ID" value="ACK87903.1"/>
    <property type="molecule type" value="Genomic_DNA"/>
</dbReference>
<dbReference type="RefSeq" id="WP_000157696.1">
    <property type="nucleotide sequence ID" value="NC_011773.1"/>
</dbReference>
<dbReference type="SMR" id="B7JGN1"/>
<dbReference type="GeneID" id="93005817"/>
<dbReference type="KEGG" id="bcu:BCAH820_5397"/>
<dbReference type="HOGENOM" id="CLU_050669_0_1_9"/>
<dbReference type="Proteomes" id="UP000001363">
    <property type="component" value="Chromosome"/>
</dbReference>
<dbReference type="GO" id="GO:0005886">
    <property type="term" value="C:plasma membrane"/>
    <property type="evidence" value="ECO:0007669"/>
    <property type="project" value="UniProtKB-SubCell"/>
</dbReference>
<dbReference type="GO" id="GO:0045259">
    <property type="term" value="C:proton-transporting ATP synthase complex"/>
    <property type="evidence" value="ECO:0007669"/>
    <property type="project" value="UniProtKB-KW"/>
</dbReference>
<dbReference type="GO" id="GO:0005524">
    <property type="term" value="F:ATP binding"/>
    <property type="evidence" value="ECO:0007669"/>
    <property type="project" value="UniProtKB-UniRule"/>
</dbReference>
<dbReference type="GO" id="GO:0046933">
    <property type="term" value="F:proton-transporting ATP synthase activity, rotational mechanism"/>
    <property type="evidence" value="ECO:0007669"/>
    <property type="project" value="UniProtKB-UniRule"/>
</dbReference>
<dbReference type="GO" id="GO:0042777">
    <property type="term" value="P:proton motive force-driven plasma membrane ATP synthesis"/>
    <property type="evidence" value="ECO:0007669"/>
    <property type="project" value="UniProtKB-UniRule"/>
</dbReference>
<dbReference type="CDD" id="cd12151">
    <property type="entry name" value="F1-ATPase_gamma"/>
    <property type="match status" value="1"/>
</dbReference>
<dbReference type="FunFam" id="3.40.1380.10:FF:000002">
    <property type="entry name" value="ATP synthase gamma chain"/>
    <property type="match status" value="1"/>
</dbReference>
<dbReference type="Gene3D" id="3.40.1380.10">
    <property type="match status" value="1"/>
</dbReference>
<dbReference type="Gene3D" id="1.10.287.80">
    <property type="entry name" value="ATP synthase, gamma subunit, helix hairpin domain"/>
    <property type="match status" value="1"/>
</dbReference>
<dbReference type="HAMAP" id="MF_00815">
    <property type="entry name" value="ATP_synth_gamma_bact"/>
    <property type="match status" value="1"/>
</dbReference>
<dbReference type="InterPro" id="IPR035968">
    <property type="entry name" value="ATP_synth_F1_ATPase_gsu"/>
</dbReference>
<dbReference type="InterPro" id="IPR000131">
    <property type="entry name" value="ATP_synth_F1_gsu"/>
</dbReference>
<dbReference type="InterPro" id="IPR023632">
    <property type="entry name" value="ATP_synth_F1_gsu_CS"/>
</dbReference>
<dbReference type="NCBIfam" id="TIGR01146">
    <property type="entry name" value="ATPsyn_F1gamma"/>
    <property type="match status" value="1"/>
</dbReference>
<dbReference type="PANTHER" id="PTHR11693">
    <property type="entry name" value="ATP SYNTHASE GAMMA CHAIN"/>
    <property type="match status" value="1"/>
</dbReference>
<dbReference type="PANTHER" id="PTHR11693:SF22">
    <property type="entry name" value="ATP SYNTHASE SUBUNIT GAMMA, MITOCHONDRIAL"/>
    <property type="match status" value="1"/>
</dbReference>
<dbReference type="Pfam" id="PF00231">
    <property type="entry name" value="ATP-synt"/>
    <property type="match status" value="1"/>
</dbReference>
<dbReference type="PRINTS" id="PR00126">
    <property type="entry name" value="ATPASEGAMMA"/>
</dbReference>
<dbReference type="SUPFAM" id="SSF52943">
    <property type="entry name" value="ATP synthase (F1-ATPase), gamma subunit"/>
    <property type="match status" value="1"/>
</dbReference>
<dbReference type="PROSITE" id="PS00153">
    <property type="entry name" value="ATPASE_GAMMA"/>
    <property type="match status" value="1"/>
</dbReference>
<organism>
    <name type="scientific">Bacillus cereus (strain AH820)</name>
    <dbReference type="NCBI Taxonomy" id="405535"/>
    <lineage>
        <taxon>Bacteria</taxon>
        <taxon>Bacillati</taxon>
        <taxon>Bacillota</taxon>
        <taxon>Bacilli</taxon>
        <taxon>Bacillales</taxon>
        <taxon>Bacillaceae</taxon>
        <taxon>Bacillus</taxon>
        <taxon>Bacillus cereus group</taxon>
    </lineage>
</organism>
<reference key="1">
    <citation type="submission" date="2008-10" db="EMBL/GenBank/DDBJ databases">
        <title>Genome sequence of Bacillus cereus AH820.</title>
        <authorList>
            <person name="Dodson R.J."/>
            <person name="Durkin A.S."/>
            <person name="Rosovitz M.J."/>
            <person name="Rasko D.A."/>
            <person name="Hoffmaster A."/>
            <person name="Ravel J."/>
            <person name="Sutton G."/>
        </authorList>
    </citation>
    <scope>NUCLEOTIDE SEQUENCE [LARGE SCALE GENOMIC DNA]</scope>
    <source>
        <strain>AH820</strain>
    </source>
</reference>
<comment type="function">
    <text evidence="1">Produces ATP from ADP in the presence of a proton gradient across the membrane. The gamma chain is believed to be important in regulating ATPase activity and the flow of protons through the CF(0) complex.</text>
</comment>
<comment type="subunit">
    <text evidence="1">F-type ATPases have 2 components, CF(1) - the catalytic core - and CF(0) - the membrane proton channel. CF(1) has five subunits: alpha(3), beta(3), gamma(1), delta(1), epsilon(1). CF(0) has three main subunits: a, b and c.</text>
</comment>
<comment type="subcellular location">
    <subcellularLocation>
        <location evidence="1">Cell membrane</location>
        <topology evidence="1">Peripheral membrane protein</topology>
    </subcellularLocation>
</comment>
<comment type="similarity">
    <text evidence="1">Belongs to the ATPase gamma chain family.</text>
</comment>
<feature type="chain" id="PRO_1000134108" description="ATP synthase gamma chain">
    <location>
        <begin position="1"/>
        <end position="286"/>
    </location>
</feature>
<sequence length="286" mass="31606">MASLRDIKAKINSTKKTSQITKAMEMVSASKLNRAEQNAKSFVPYMEKIQEVVASIAQGSKGINHPMLNARPVKRTGYIVITSDRGLAGGYNSNVLRTVSNVIRERHNMDSNQYSIIVLGRLGRDYLKRRGFNIIDEVVGLSDHPSFTDIKDLASRAIAMFADGAYDELYIYYNHYVSKISQEVTENKILPLTDVASDKPTTAYEFEPSEEEILKVLLPQYAESLVYGALLDGKASEHAARMTAMKSATDNAMEVIDSLTLSFNRARQAAITQEITEIVGGAAALE</sequence>
<keyword id="KW-0066">ATP synthesis</keyword>
<keyword id="KW-1003">Cell membrane</keyword>
<keyword id="KW-0139">CF(1)</keyword>
<keyword id="KW-0375">Hydrogen ion transport</keyword>
<keyword id="KW-0406">Ion transport</keyword>
<keyword id="KW-0472">Membrane</keyword>
<keyword id="KW-0813">Transport</keyword>
<name>ATPG_BACC0</name>